<comment type="function">
    <text evidence="1">Participates in the assembly of the infectious particles by decorating the outer surface of the capsid shell and thus forming a layer between the capsid and the tegument. Complexes composed of the major capsid protein and small capsomere-interacting protein/SCP assemble together in the host cytoplasm and are translocated to the nucleus, where they accumulate and participate in capsid assembly.</text>
</comment>
<comment type="subunit">
    <text evidence="1 3">Interacts with the major capsid protein/MCP.</text>
</comment>
<comment type="subcellular location">
    <subcellularLocation>
        <location evidence="1 3">Virion</location>
    </subcellularLocation>
    <subcellularLocation>
        <location evidence="1">Host nucleus</location>
    </subcellularLocation>
</comment>
<comment type="similarity">
    <text evidence="1">Belongs to the herpesviridae small capsomere-interacting protein family.</text>
</comment>
<protein>
    <recommendedName>
        <fullName evidence="1">Small capsomere-interacting protein</fullName>
    </recommendedName>
</protein>
<sequence>MTTIRGDDLSNQITQISGSSSKKEEEKKKQQMLTGVLGLQPTMANHPVLGVFLPKYAKQNGGNVDKTAFRLDLIRMLALHRLNTKTGSD</sequence>
<keyword id="KW-0002">3D-structure</keyword>
<keyword id="KW-0167">Capsid protein</keyword>
<keyword id="KW-1048">Host nucleus</keyword>
<keyword id="KW-1185">Reference proteome</keyword>
<keyword id="KW-0946">Virion</keyword>
<reference key="1">
    <citation type="journal article" date="1999" name="J. Virol.">
        <title>Human herpesvirus 6B genome sequence: coding content and comparison with human herpesvirus 6A.</title>
        <authorList>
            <person name="Dominguez G."/>
            <person name="Dambaugh T.R."/>
            <person name="Stamey F.R."/>
            <person name="Dewhurst S."/>
            <person name="Inoue N."/>
            <person name="Pellett P.E."/>
        </authorList>
    </citation>
    <scope>NUCLEOTIDE SEQUENCE [LARGE SCALE GENOMIC DNA]</scope>
</reference>
<reference evidence="4" key="2">
    <citation type="journal article" date="2019" name="Nat. Commun.">
        <title>Atomic structure of the human herpesvirus 6B capsid and capsid-associated tegument complexes.</title>
        <authorList>
            <person name="Zhang Y."/>
            <person name="Liu W."/>
            <person name="Li Z."/>
            <person name="Kumar V."/>
            <person name="Alvarez-Cabrera A.L."/>
            <person name="Leibovitch E.C."/>
            <person name="Cui Y."/>
            <person name="Mei Y."/>
            <person name="Bi G.Q."/>
            <person name="Jacobson S."/>
            <person name="Zhou Z.H."/>
        </authorList>
    </citation>
    <scope>STRUCTURE BY ELECTRON MICROSCOPY (9.00 ANGSTROMS)</scope>
    <scope>INTERACTION WITH THE MAJOR CAPSID PROTEIN</scope>
    <scope>SUBCELLULAR LOCATION</scope>
</reference>
<dbReference type="EMBL" id="AF157706">
    <property type="protein sequence ID" value="AAD49646.1"/>
    <property type="molecule type" value="Genomic_DNA"/>
</dbReference>
<dbReference type="PIR" id="T43992">
    <property type="entry name" value="T43992"/>
</dbReference>
<dbReference type="RefSeq" id="NP_050213.1">
    <property type="nucleotide sequence ID" value="NC_000898.1"/>
</dbReference>
<dbReference type="PDB" id="6Q1F">
    <property type="method" value="EM"/>
    <property type="resolution" value="9.00 A"/>
    <property type="chains" value="1/2/3/4/J/K/L/M/N/O/P/Q/R/x/y/z=1-89"/>
</dbReference>
<dbReference type="PDBsum" id="6Q1F"/>
<dbReference type="SMR" id="P0DTP1"/>
<dbReference type="GeneID" id="1497034"/>
<dbReference type="KEGG" id="vg:1497034"/>
<dbReference type="Proteomes" id="UP000006930">
    <property type="component" value="Segment"/>
</dbReference>
<dbReference type="GO" id="GO:0042025">
    <property type="term" value="C:host cell nucleus"/>
    <property type="evidence" value="ECO:0007669"/>
    <property type="project" value="UniProtKB-SubCell"/>
</dbReference>
<dbReference type="GO" id="GO:0019028">
    <property type="term" value="C:viral capsid"/>
    <property type="evidence" value="ECO:0007669"/>
    <property type="project" value="UniProtKB-UniRule"/>
</dbReference>
<dbReference type="GO" id="GO:0016032">
    <property type="term" value="P:viral process"/>
    <property type="evidence" value="ECO:0007669"/>
    <property type="project" value="UniProtKB-UniRule"/>
</dbReference>
<dbReference type="HAMAP" id="MF_04021">
    <property type="entry name" value="HSV_SCP_betahv"/>
    <property type="match status" value="1"/>
</dbReference>
<dbReference type="InterPro" id="IPR031385">
    <property type="entry name" value="HV_small_capsid"/>
</dbReference>
<dbReference type="Pfam" id="PF17086">
    <property type="entry name" value="HV_small_capsid"/>
    <property type="match status" value="1"/>
</dbReference>
<organism>
    <name type="scientific">Human herpesvirus 6B (strain Z29)</name>
    <name type="common">HHV-6 variant B</name>
    <name type="synonym">Human B lymphotropic virus</name>
    <dbReference type="NCBI Taxonomy" id="36351"/>
    <lineage>
        <taxon>Viruses</taxon>
        <taxon>Duplodnaviria</taxon>
        <taxon>Heunggongvirae</taxon>
        <taxon>Peploviricota</taxon>
        <taxon>Herviviricetes</taxon>
        <taxon>Herpesvirales</taxon>
        <taxon>Orthoherpesviridae</taxon>
        <taxon>Betaherpesvirinae</taxon>
        <taxon>Roseolovirus</taxon>
        <taxon>Roseolovirus humanbeta6b</taxon>
        <taxon>Human herpesvirus 6B</taxon>
    </lineage>
</organism>
<accession>P0DTP1</accession>
<accession>Q77PU9</accession>
<accession>Q9WT32</accession>
<organismHost>
    <name type="scientific">Homo sapiens</name>
    <name type="common">Human</name>
    <dbReference type="NCBI Taxonomy" id="9606"/>
</organismHost>
<feature type="chain" id="PRO_0000408428" description="Small capsomere-interacting protein">
    <location>
        <begin position="1"/>
        <end position="89"/>
    </location>
</feature>
<feature type="region of interest" description="Disordered" evidence="2">
    <location>
        <begin position="1"/>
        <end position="31"/>
    </location>
</feature>
<feature type="compositionally biased region" description="Polar residues" evidence="2">
    <location>
        <begin position="9"/>
        <end position="18"/>
    </location>
</feature>
<evidence type="ECO:0000255" key="1">
    <source>
        <dbReference type="HAMAP-Rule" id="MF_04021"/>
    </source>
</evidence>
<evidence type="ECO:0000256" key="2">
    <source>
        <dbReference type="SAM" id="MobiDB-lite"/>
    </source>
</evidence>
<evidence type="ECO:0000269" key="3">
    <source>
    </source>
</evidence>
<evidence type="ECO:0007744" key="4">
    <source>
        <dbReference type="PDB" id="6Q1F"/>
    </source>
</evidence>
<name>SCP_HHV6Z</name>
<gene>
    <name evidence="1" type="primary">SCP</name>
    <name type="synonym">U32</name>
</gene>
<proteinExistence type="evidence at protein level"/>